<dbReference type="EC" id="5.3.1.16" evidence="1"/>
<dbReference type="EMBL" id="CP000388">
    <property type="protein sequence ID" value="ABG41393.1"/>
    <property type="molecule type" value="Genomic_DNA"/>
</dbReference>
<dbReference type="RefSeq" id="WP_011575650.1">
    <property type="nucleotide sequence ID" value="NC_008228.1"/>
</dbReference>
<dbReference type="SMR" id="Q15RU5"/>
<dbReference type="STRING" id="342610.Patl_2885"/>
<dbReference type="KEGG" id="pat:Patl_2885"/>
<dbReference type="eggNOG" id="COG0106">
    <property type="taxonomic scope" value="Bacteria"/>
</dbReference>
<dbReference type="HOGENOM" id="CLU_048577_1_2_6"/>
<dbReference type="OrthoDB" id="9807749at2"/>
<dbReference type="UniPathway" id="UPA00031">
    <property type="reaction ID" value="UER00009"/>
</dbReference>
<dbReference type="Proteomes" id="UP000001981">
    <property type="component" value="Chromosome"/>
</dbReference>
<dbReference type="GO" id="GO:0005737">
    <property type="term" value="C:cytoplasm"/>
    <property type="evidence" value="ECO:0007669"/>
    <property type="project" value="UniProtKB-SubCell"/>
</dbReference>
<dbReference type="GO" id="GO:0003949">
    <property type="term" value="F:1-(5-phosphoribosyl)-5-[(5-phosphoribosylamino)methylideneamino]imidazole-4-carboxamide isomerase activity"/>
    <property type="evidence" value="ECO:0007669"/>
    <property type="project" value="UniProtKB-UniRule"/>
</dbReference>
<dbReference type="GO" id="GO:0000105">
    <property type="term" value="P:L-histidine biosynthetic process"/>
    <property type="evidence" value="ECO:0007669"/>
    <property type="project" value="UniProtKB-UniRule"/>
</dbReference>
<dbReference type="GO" id="GO:0000162">
    <property type="term" value="P:L-tryptophan biosynthetic process"/>
    <property type="evidence" value="ECO:0007669"/>
    <property type="project" value="TreeGrafter"/>
</dbReference>
<dbReference type="CDD" id="cd04732">
    <property type="entry name" value="HisA"/>
    <property type="match status" value="1"/>
</dbReference>
<dbReference type="FunFam" id="3.20.20.70:FF:000009">
    <property type="entry name" value="1-(5-phosphoribosyl)-5-[(5-phosphoribosylamino)methylideneamino] imidazole-4-carboxamide isomerase"/>
    <property type="match status" value="1"/>
</dbReference>
<dbReference type="Gene3D" id="3.20.20.70">
    <property type="entry name" value="Aldolase class I"/>
    <property type="match status" value="1"/>
</dbReference>
<dbReference type="HAMAP" id="MF_01014">
    <property type="entry name" value="HisA"/>
    <property type="match status" value="1"/>
</dbReference>
<dbReference type="InterPro" id="IPR013785">
    <property type="entry name" value="Aldolase_TIM"/>
</dbReference>
<dbReference type="InterPro" id="IPR006062">
    <property type="entry name" value="His_biosynth"/>
</dbReference>
<dbReference type="InterPro" id="IPR006063">
    <property type="entry name" value="HisA_bact_arch"/>
</dbReference>
<dbReference type="InterPro" id="IPR044524">
    <property type="entry name" value="Isoase_HisA-like"/>
</dbReference>
<dbReference type="InterPro" id="IPR023016">
    <property type="entry name" value="Isoase_HisA-like_bact"/>
</dbReference>
<dbReference type="InterPro" id="IPR011060">
    <property type="entry name" value="RibuloseP-bd_barrel"/>
</dbReference>
<dbReference type="NCBIfam" id="TIGR00007">
    <property type="entry name" value="1-(5-phosphoribosyl)-5-[(5-phosphoribosylamino)methylideneamino]imidazole-4-carboxamide isomerase"/>
    <property type="match status" value="1"/>
</dbReference>
<dbReference type="PANTHER" id="PTHR43090">
    <property type="entry name" value="1-(5-PHOSPHORIBOSYL)-5-[(5-PHOSPHORIBOSYLAMINO)METHYLIDENEAMINO] IMIDAZOLE-4-CARBOXAMIDE ISOMERASE"/>
    <property type="match status" value="1"/>
</dbReference>
<dbReference type="PANTHER" id="PTHR43090:SF2">
    <property type="entry name" value="1-(5-PHOSPHORIBOSYL)-5-[(5-PHOSPHORIBOSYLAMINO)METHYLIDENEAMINO] IMIDAZOLE-4-CARBOXAMIDE ISOMERASE"/>
    <property type="match status" value="1"/>
</dbReference>
<dbReference type="Pfam" id="PF00977">
    <property type="entry name" value="His_biosynth"/>
    <property type="match status" value="1"/>
</dbReference>
<dbReference type="SUPFAM" id="SSF51366">
    <property type="entry name" value="Ribulose-phoshate binding barrel"/>
    <property type="match status" value="1"/>
</dbReference>
<sequence>MIIPAIDLIEGSVVRLYQGDYEQKTKYELDPIDVVNNYADQGAKWLHIVDLTGAKDTNKRQLKLIGDMVATGRMQFQAGGGIRSEQDVAQLLALGVKRVVIGSLAVKEPELVKGWVTKYGSEAIVLALDINIDEQGNKFIATHGWQENSGVSLEALLEDFLSVGAKHVLCTDISRDGTLQGANHQLYSEMAAKFPTIEWQASGGIGNLDDIAVLKPTHVSGVILGRALLEGKFTVEQAIECWQS</sequence>
<reference key="1">
    <citation type="submission" date="2006-06" db="EMBL/GenBank/DDBJ databases">
        <title>Complete sequence of Pseudoalteromonas atlantica T6c.</title>
        <authorList>
            <consortium name="US DOE Joint Genome Institute"/>
            <person name="Copeland A."/>
            <person name="Lucas S."/>
            <person name="Lapidus A."/>
            <person name="Barry K."/>
            <person name="Detter J.C."/>
            <person name="Glavina del Rio T."/>
            <person name="Hammon N."/>
            <person name="Israni S."/>
            <person name="Dalin E."/>
            <person name="Tice H."/>
            <person name="Pitluck S."/>
            <person name="Saunders E."/>
            <person name="Brettin T."/>
            <person name="Bruce D."/>
            <person name="Han C."/>
            <person name="Tapia R."/>
            <person name="Gilna P."/>
            <person name="Schmutz J."/>
            <person name="Larimer F."/>
            <person name="Land M."/>
            <person name="Hauser L."/>
            <person name="Kyrpides N."/>
            <person name="Kim E."/>
            <person name="Karls A.C."/>
            <person name="Bartlett D."/>
            <person name="Higgins B.P."/>
            <person name="Richardson P."/>
        </authorList>
    </citation>
    <scope>NUCLEOTIDE SEQUENCE [LARGE SCALE GENOMIC DNA]</scope>
    <source>
        <strain>T6c / ATCC BAA-1087</strain>
    </source>
</reference>
<name>HIS4_PSEA6</name>
<protein>
    <recommendedName>
        <fullName evidence="1">1-(5-phosphoribosyl)-5-[(5-phosphoribosylamino)methylideneamino] imidazole-4-carboxamide isomerase</fullName>
        <ecNumber evidence="1">5.3.1.16</ecNumber>
    </recommendedName>
    <alternativeName>
        <fullName evidence="1">Phosphoribosylformimino-5-aminoimidazole carboxamide ribotide isomerase</fullName>
    </alternativeName>
</protein>
<comment type="catalytic activity">
    <reaction evidence="1">
        <text>1-(5-phospho-beta-D-ribosyl)-5-[(5-phospho-beta-D-ribosylamino)methylideneamino]imidazole-4-carboxamide = 5-[(5-phospho-1-deoxy-D-ribulos-1-ylimino)methylamino]-1-(5-phospho-beta-D-ribosyl)imidazole-4-carboxamide</text>
        <dbReference type="Rhea" id="RHEA:15469"/>
        <dbReference type="ChEBI" id="CHEBI:58435"/>
        <dbReference type="ChEBI" id="CHEBI:58525"/>
        <dbReference type="EC" id="5.3.1.16"/>
    </reaction>
</comment>
<comment type="pathway">
    <text evidence="1">Amino-acid biosynthesis; L-histidine biosynthesis; L-histidine from 5-phospho-alpha-D-ribose 1-diphosphate: step 4/9.</text>
</comment>
<comment type="subcellular location">
    <subcellularLocation>
        <location evidence="1">Cytoplasm</location>
    </subcellularLocation>
</comment>
<comment type="similarity">
    <text evidence="1">Belongs to the HisA/HisF family.</text>
</comment>
<keyword id="KW-0028">Amino-acid biosynthesis</keyword>
<keyword id="KW-0963">Cytoplasm</keyword>
<keyword id="KW-0368">Histidine biosynthesis</keyword>
<keyword id="KW-0413">Isomerase</keyword>
<feature type="chain" id="PRO_0000290512" description="1-(5-phosphoribosyl)-5-[(5-phosphoribosylamino)methylideneamino] imidazole-4-carboxamide isomerase">
    <location>
        <begin position="1"/>
        <end position="244"/>
    </location>
</feature>
<feature type="active site" description="Proton acceptor" evidence="1">
    <location>
        <position position="7"/>
    </location>
</feature>
<feature type="active site" description="Proton donor" evidence="1">
    <location>
        <position position="129"/>
    </location>
</feature>
<organism>
    <name type="scientific">Pseudoalteromonas atlantica (strain T6c / ATCC BAA-1087)</name>
    <dbReference type="NCBI Taxonomy" id="3042615"/>
    <lineage>
        <taxon>Bacteria</taxon>
        <taxon>Pseudomonadati</taxon>
        <taxon>Pseudomonadota</taxon>
        <taxon>Gammaproteobacteria</taxon>
        <taxon>Alteromonadales</taxon>
        <taxon>Alteromonadaceae</taxon>
        <taxon>Paraglaciecola</taxon>
    </lineage>
</organism>
<evidence type="ECO:0000255" key="1">
    <source>
        <dbReference type="HAMAP-Rule" id="MF_01014"/>
    </source>
</evidence>
<proteinExistence type="inferred from homology"/>
<accession>Q15RU5</accession>
<gene>
    <name evidence="1" type="primary">hisA</name>
    <name type="ordered locus">Patl_2885</name>
</gene>